<proteinExistence type="inferred from homology"/>
<feature type="chain" id="PRO_0000121479" description="Transcription factor S">
    <location>
        <begin position="1"/>
        <end position="111"/>
    </location>
</feature>
<feature type="zinc finger region" description="C4-type" evidence="2">
    <location>
        <begin position="4"/>
        <end position="27"/>
    </location>
</feature>
<feature type="zinc finger region" description="TFIIS-type" evidence="3">
    <location>
        <begin position="68"/>
        <end position="108"/>
    </location>
</feature>
<feature type="binding site" evidence="4">
    <location>
        <position position="4"/>
    </location>
    <ligand>
        <name>Zn(2+)</name>
        <dbReference type="ChEBI" id="CHEBI:29105"/>
        <label>1</label>
    </ligand>
</feature>
<feature type="binding site" evidence="4">
    <location>
        <position position="7"/>
    </location>
    <ligand>
        <name>Zn(2+)</name>
        <dbReference type="ChEBI" id="CHEBI:29105"/>
        <label>1</label>
    </ligand>
</feature>
<feature type="binding site" evidence="4">
    <location>
        <position position="24"/>
    </location>
    <ligand>
        <name>Zn(2+)</name>
        <dbReference type="ChEBI" id="CHEBI:29105"/>
        <label>1</label>
    </ligand>
</feature>
<feature type="binding site" evidence="4">
    <location>
        <position position="27"/>
    </location>
    <ligand>
        <name>Zn(2+)</name>
        <dbReference type="ChEBI" id="CHEBI:29105"/>
        <label>1</label>
    </ligand>
</feature>
<feature type="binding site" evidence="3">
    <location>
        <position position="72"/>
    </location>
    <ligand>
        <name>Zn(2+)</name>
        <dbReference type="ChEBI" id="CHEBI:29105"/>
        <label>2</label>
    </ligand>
</feature>
<feature type="binding site" evidence="3">
    <location>
        <position position="75"/>
    </location>
    <ligand>
        <name>Zn(2+)</name>
        <dbReference type="ChEBI" id="CHEBI:29105"/>
        <label>2</label>
    </ligand>
</feature>
<feature type="binding site" evidence="3">
    <location>
        <position position="100"/>
    </location>
    <ligand>
        <name>Zn(2+)</name>
        <dbReference type="ChEBI" id="CHEBI:29105"/>
        <label>2</label>
    </ligand>
</feature>
<feature type="binding site" evidence="3">
    <location>
        <position position="103"/>
    </location>
    <ligand>
        <name>Zn(2+)</name>
        <dbReference type="ChEBI" id="CHEBI:29105"/>
        <label>2</label>
    </ligand>
</feature>
<feature type="sequence conflict" description="In Ref. 1; CAA50073." evidence="5" ref="1">
    <original>G</original>
    <variation>A</variation>
    <location>
        <position position="28"/>
    </location>
</feature>
<feature type="sequence conflict" description="In Ref. 1; CAA50073." evidence="5" ref="1">
    <original>E</original>
    <variation>A</variation>
    <location>
        <position position="50"/>
    </location>
</feature>
<feature type="sequence conflict" description="In Ref. 1; CAA50073." evidence="5" ref="1">
    <original>E</original>
    <variation>A</variation>
    <location>
        <position position="56"/>
    </location>
</feature>
<feature type="sequence conflict" description="In Ref. 1; CAA50073." evidence="5" ref="1">
    <original>KT</original>
    <variation>NP</variation>
    <location>
        <begin position="61"/>
        <end position="62"/>
    </location>
</feature>
<comment type="function">
    <text evidence="1">Induces RNA cleavage activity in the RNA polymerase. In its presence, the cleavage activity of the RNA polymerase truncates the RNA back to position +15 in a stepwise manner by releasing mainly dinucleotides from the 3'-end of the nascent RNA. The truncated RNAs are able to continue elongation. Involved in transcriptional proofreading and fidelity. Misincorporation of nucleotides during elongation of transcription leads to arrested elongation complexes which are rescued by TFS-promoted removal of a dinucleotide from the 3'-end. TFS is able to induce a cleavage resynthesis cycle in stalled elongation complexes (resulting from the next missing nucleotide or a reduced incorporation rate of a wrong nucleotide) preventing misincorporation and enabling proofreading in a post-incorporation manner. Pausing of elongation complexes is the main determinant of TFS-induced RNA cleavage.</text>
</comment>
<comment type="similarity">
    <text evidence="5">Belongs to the archaeal RpoM/eukaryotic RPA12/RPB9/RPC11 RNA polymerase family.</text>
</comment>
<comment type="caution">
    <text evidence="5">More similar by sequence similarity to the eukaryotic RNA polymerase subunits.</text>
</comment>
<comment type="sequence caution" evidence="5">
    <conflict type="erroneous initiation">
        <sequence resource="EMBL-CDS" id="AAY79590"/>
    </conflict>
    <text>Truncated N-terminus.</text>
</comment>
<evidence type="ECO:0000250" key="1">
    <source>
        <dbReference type="UniProtKB" id="Q9P9I8"/>
    </source>
</evidence>
<evidence type="ECO:0000255" key="2"/>
<evidence type="ECO:0000255" key="3">
    <source>
        <dbReference type="PROSITE-ProRule" id="PRU00472"/>
    </source>
</evidence>
<evidence type="ECO:0000255" key="4">
    <source>
        <dbReference type="PROSITE-ProRule" id="PRU10145"/>
    </source>
</evidence>
<evidence type="ECO:0000305" key="5"/>
<reference key="1">
    <citation type="journal article" date="1993" name="Nucleic Acids Res.">
        <title>Putative tfIIs gene of Sulfolobus acidocaldarius encoding an archaeal transcription elongation factor is situated directly downstream of the gene for a small subunit of DNA-dependent RNA polymerase.</title>
        <authorList>
            <person name="Langer D."/>
            <person name="Zillig W."/>
        </authorList>
    </citation>
    <scope>NUCLEOTIDE SEQUENCE [GENOMIC DNA]</scope>
    <source>
        <strain>ATCC 33909 / DSM 639 / JCM 8929 / NBRC 15157 / NCIMB 11770</strain>
    </source>
</reference>
<reference key="2">
    <citation type="journal article" date="2005" name="J. Bacteriol.">
        <title>The genome of Sulfolobus acidocaldarius, a model organism of the Crenarchaeota.</title>
        <authorList>
            <person name="Chen L."/>
            <person name="Bruegger K."/>
            <person name="Skovgaard M."/>
            <person name="Redder P."/>
            <person name="She Q."/>
            <person name="Torarinsson E."/>
            <person name="Greve B."/>
            <person name="Awayez M."/>
            <person name="Zibat A."/>
            <person name="Klenk H.-P."/>
            <person name="Garrett R.A."/>
        </authorList>
    </citation>
    <scope>NUCLEOTIDE SEQUENCE [LARGE SCALE GENOMIC DNA]</scope>
    <source>
        <strain>ATCC 33909 / DSM 639 / JCM 8929 / NBRC 15157 / NCIMB 11770</strain>
    </source>
</reference>
<organism>
    <name type="scientific">Sulfolobus acidocaldarius (strain ATCC 33909 / DSM 639 / JCM 8929 / NBRC 15157 / NCIMB 11770)</name>
    <dbReference type="NCBI Taxonomy" id="330779"/>
    <lineage>
        <taxon>Archaea</taxon>
        <taxon>Thermoproteota</taxon>
        <taxon>Thermoprotei</taxon>
        <taxon>Sulfolobales</taxon>
        <taxon>Sulfolobaceae</taxon>
        <taxon>Sulfolobus</taxon>
    </lineage>
</organism>
<protein>
    <recommendedName>
        <fullName evidence="1">Transcription factor S</fullName>
    </recommendedName>
    <alternativeName>
        <fullName evidence="1">Transcription elongation factor IIS/RNA polymerase subunit homolog</fullName>
        <shortName evidence="1">TFIIS/RPSU homolog</shortName>
    </alternativeName>
</protein>
<gene>
    <name evidence="1" type="primary">tfs</name>
    <name type="ordered locus">Saci_0171</name>
</gene>
<name>TFS_SULAC</name>
<accession>Q07271</accession>
<accession>Q4JC89</accession>
<keyword id="KW-0238">DNA-binding</keyword>
<keyword id="KW-0240">DNA-directed RNA polymerase</keyword>
<keyword id="KW-0479">Metal-binding</keyword>
<keyword id="KW-1185">Reference proteome</keyword>
<keyword id="KW-0804">Transcription</keyword>
<keyword id="KW-0805">Transcription regulation</keyword>
<keyword id="KW-0862">Zinc</keyword>
<keyword id="KW-0863">Zinc-finger</keyword>
<dbReference type="EMBL" id="X70805">
    <property type="protein sequence ID" value="CAA50073.1"/>
    <property type="molecule type" value="Genomic_DNA"/>
</dbReference>
<dbReference type="EMBL" id="CP000077">
    <property type="protein sequence ID" value="AAY79590.1"/>
    <property type="status" value="ALT_INIT"/>
    <property type="molecule type" value="Genomic_DNA"/>
</dbReference>
<dbReference type="PIR" id="S33694">
    <property type="entry name" value="S33694"/>
</dbReference>
<dbReference type="RefSeq" id="WP_015385375.1">
    <property type="nucleotide sequence ID" value="NC_007181.1"/>
</dbReference>
<dbReference type="SMR" id="Q07271"/>
<dbReference type="STRING" id="330779.Saci_0171"/>
<dbReference type="GeneID" id="14550698"/>
<dbReference type="KEGG" id="sai:Saci_0171"/>
<dbReference type="PATRIC" id="fig|330779.12.peg.162"/>
<dbReference type="eggNOG" id="arCOG00579">
    <property type="taxonomic scope" value="Archaea"/>
</dbReference>
<dbReference type="HOGENOM" id="CLU_093932_3_2_2"/>
<dbReference type="BRENDA" id="2.7.7.6">
    <property type="organism ID" value="6160"/>
</dbReference>
<dbReference type="Proteomes" id="UP000001018">
    <property type="component" value="Chromosome"/>
</dbReference>
<dbReference type="GO" id="GO:0000428">
    <property type="term" value="C:DNA-directed RNA polymerase complex"/>
    <property type="evidence" value="ECO:0007669"/>
    <property type="project" value="UniProtKB-KW"/>
</dbReference>
<dbReference type="GO" id="GO:0003677">
    <property type="term" value="F:DNA binding"/>
    <property type="evidence" value="ECO:0007669"/>
    <property type="project" value="UniProtKB-KW"/>
</dbReference>
<dbReference type="GO" id="GO:0003899">
    <property type="term" value="F:DNA-directed RNA polymerase activity"/>
    <property type="evidence" value="ECO:0007669"/>
    <property type="project" value="InterPro"/>
</dbReference>
<dbReference type="GO" id="GO:0008270">
    <property type="term" value="F:zinc ion binding"/>
    <property type="evidence" value="ECO:0000250"/>
    <property type="project" value="UniProtKB"/>
</dbReference>
<dbReference type="GO" id="GO:0006351">
    <property type="term" value="P:DNA-templated transcription"/>
    <property type="evidence" value="ECO:0007669"/>
    <property type="project" value="InterPro"/>
</dbReference>
<dbReference type="GO" id="GO:0006355">
    <property type="term" value="P:regulation of DNA-templated transcription"/>
    <property type="evidence" value="ECO:0000250"/>
    <property type="project" value="UniProtKB"/>
</dbReference>
<dbReference type="CDD" id="cd10511">
    <property type="entry name" value="Zn-ribbon_TFS"/>
    <property type="match status" value="1"/>
</dbReference>
<dbReference type="Gene3D" id="2.20.25.10">
    <property type="match status" value="2"/>
</dbReference>
<dbReference type="InterPro" id="IPR019761">
    <property type="entry name" value="DNA-dir_RNA_pol-M_15_CS"/>
</dbReference>
<dbReference type="InterPro" id="IPR012164">
    <property type="entry name" value="Rpa12/Rpb9/Rpc10/TFS"/>
</dbReference>
<dbReference type="InterPro" id="IPR006288">
    <property type="entry name" value="TFS"/>
</dbReference>
<dbReference type="InterPro" id="IPR001529">
    <property type="entry name" value="Zn_ribbon_RPB9"/>
</dbReference>
<dbReference type="InterPro" id="IPR001222">
    <property type="entry name" value="Znf_TFIIS"/>
</dbReference>
<dbReference type="NCBIfam" id="TIGR01384">
    <property type="entry name" value="TFS_arch"/>
    <property type="match status" value="1"/>
</dbReference>
<dbReference type="PANTHER" id="PTHR11239">
    <property type="entry name" value="DNA-DIRECTED RNA POLYMERASE"/>
    <property type="match status" value="1"/>
</dbReference>
<dbReference type="PANTHER" id="PTHR11239:SF12">
    <property type="entry name" value="DNA-DIRECTED RNA POLYMERASE III SUBUNIT RPC10"/>
    <property type="match status" value="1"/>
</dbReference>
<dbReference type="Pfam" id="PF02150">
    <property type="entry name" value="Zn_ribbon_RPB9"/>
    <property type="match status" value="1"/>
</dbReference>
<dbReference type="Pfam" id="PF01096">
    <property type="entry name" value="Zn_ribbon_TFIIS"/>
    <property type="match status" value="1"/>
</dbReference>
<dbReference type="PIRSF" id="PIRSF005586">
    <property type="entry name" value="RNApol_RpoM"/>
    <property type="match status" value="1"/>
</dbReference>
<dbReference type="SMART" id="SM00661">
    <property type="entry name" value="RPOL9"/>
    <property type="match status" value="1"/>
</dbReference>
<dbReference type="SMART" id="SM00440">
    <property type="entry name" value="ZnF_C2C2"/>
    <property type="match status" value="2"/>
</dbReference>
<dbReference type="SUPFAM" id="SSF57783">
    <property type="entry name" value="Zinc beta-ribbon"/>
    <property type="match status" value="2"/>
</dbReference>
<dbReference type="PROSITE" id="PS01030">
    <property type="entry name" value="RNA_POL_M_15KD"/>
    <property type="match status" value="1"/>
</dbReference>
<dbReference type="PROSITE" id="PS00466">
    <property type="entry name" value="ZF_TFIIS_1"/>
    <property type="match status" value="1"/>
</dbReference>
<dbReference type="PROSITE" id="PS51133">
    <property type="entry name" value="ZF_TFIIS_2"/>
    <property type="match status" value="1"/>
</dbReference>
<sequence length="111" mass="12694">MKFCPKCGSMMMPRKENGKTVYKCSKCGYIDTENQKEAKITTVIKHSAKEKTLVLESDMPKTGVQLTRGISCPSCGNDEAYFWILQTRSADEPATRFYKCTKCGKVWREYE</sequence>